<organism>
    <name type="scientific">Homo sapiens</name>
    <name type="common">Human</name>
    <dbReference type="NCBI Taxonomy" id="9606"/>
    <lineage>
        <taxon>Eukaryota</taxon>
        <taxon>Metazoa</taxon>
        <taxon>Chordata</taxon>
        <taxon>Craniata</taxon>
        <taxon>Vertebrata</taxon>
        <taxon>Euteleostomi</taxon>
        <taxon>Mammalia</taxon>
        <taxon>Eutheria</taxon>
        <taxon>Euarchontoglires</taxon>
        <taxon>Primates</taxon>
        <taxon>Haplorrhini</taxon>
        <taxon>Catarrhini</taxon>
        <taxon>Hominidae</taxon>
        <taxon>Homo</taxon>
    </lineage>
</organism>
<name>AL8A1_HUMAN</name>
<proteinExistence type="evidence at protein level"/>
<gene>
    <name evidence="13" type="primary">ALDH8A1</name>
    <name type="synonym">ALDH12</name>
</gene>
<sequence length="487" mass="53401">MAGTNALLMLENFIDGKFLPCSSYIDSYDPSTGEVYCRVPNSGKDEIEAAVKAAREAFPSWSSRSPQERSRVLNQVADLLEQSLEEFAQAESKDQGKTLALARTMDIPRSVQNFRFFASSSLHHTSECTQMDHLGCMHYTVRAPVGVAGLISPWNLPLYLLTWKIAPAMAAGNTVIAKPSELTSVTAWMLCKLLDKAGVPPGVVNIVFGTGPRVGEALVSHPEVPLISFTGSQPTAERITQLSAPHCKKLSLELGGKNPAIIFEDANLDECIPATVRSSFANQGEICLCTSRIFVQKSIYSEFLKRFVEATRKWKVGIPSDPLVSIGALISKAHLEKVRSYVKRALAEGAQIWCGEGVDKLSLPARNQAGYFMLPTVITDIKDESCCMTEEIFGPVTCVVPFDSEEEVIERANNVKYGLAATVWSSNVGRVHRVAKKLQSGLVWTNCWLIRELNLPFGGMKSSGIGREGAKDSYDFFTEIKTITVKH</sequence>
<accession>Q9H2A2</accession>
<accession>B7Z521</accession>
<accession>O60793</accession>
<accession>Q24JS9</accession>
<accession>Q53GT3</accession>
<accession>Q5TI80</accession>
<keyword id="KW-0025">Alternative splicing</keyword>
<keyword id="KW-0963">Cytoplasm</keyword>
<keyword id="KW-0520">NAD</keyword>
<keyword id="KW-0560">Oxidoreductase</keyword>
<keyword id="KW-0597">Phosphoprotein</keyword>
<keyword id="KW-1267">Proteomics identification</keyword>
<keyword id="KW-1185">Reference proteome</keyword>
<reference key="1">
    <citation type="journal article" date="2000" name="J. Biol. Chem.">
        <title>cDNA cloning and expression of a human aldehyde dehydrogenase (ALDH) active with 9-cis-retinal and identification of a rat ortholog, ALDH12.</title>
        <authorList>
            <person name="Lin M."/>
            <person name="Napoli J.L."/>
        </authorList>
    </citation>
    <scope>NUCLEOTIDE SEQUENCE [MRNA] (ISOFORMS 1 AND 2)</scope>
    <scope>TISSUE SPECIFICITY</scope>
    <source>
        <tissue>Kidney</tissue>
    </source>
</reference>
<reference key="2">
    <citation type="journal article" date="2004" name="Nat. Genet.">
        <title>Complete sequencing and characterization of 21,243 full-length human cDNAs.</title>
        <authorList>
            <person name="Ota T."/>
            <person name="Suzuki Y."/>
            <person name="Nishikawa T."/>
            <person name="Otsuki T."/>
            <person name="Sugiyama T."/>
            <person name="Irie R."/>
            <person name="Wakamatsu A."/>
            <person name="Hayashi K."/>
            <person name="Sato H."/>
            <person name="Nagai K."/>
            <person name="Kimura K."/>
            <person name="Makita H."/>
            <person name="Sekine M."/>
            <person name="Obayashi M."/>
            <person name="Nishi T."/>
            <person name="Shibahara T."/>
            <person name="Tanaka T."/>
            <person name="Ishii S."/>
            <person name="Yamamoto J."/>
            <person name="Saito K."/>
            <person name="Kawai Y."/>
            <person name="Isono Y."/>
            <person name="Nakamura Y."/>
            <person name="Nagahari K."/>
            <person name="Murakami K."/>
            <person name="Yasuda T."/>
            <person name="Iwayanagi T."/>
            <person name="Wagatsuma M."/>
            <person name="Shiratori A."/>
            <person name="Sudo H."/>
            <person name="Hosoiri T."/>
            <person name="Kaku Y."/>
            <person name="Kodaira H."/>
            <person name="Kondo H."/>
            <person name="Sugawara M."/>
            <person name="Takahashi M."/>
            <person name="Kanda K."/>
            <person name="Yokoi T."/>
            <person name="Furuya T."/>
            <person name="Kikkawa E."/>
            <person name="Omura Y."/>
            <person name="Abe K."/>
            <person name="Kamihara K."/>
            <person name="Katsuta N."/>
            <person name="Sato K."/>
            <person name="Tanikawa M."/>
            <person name="Yamazaki M."/>
            <person name="Ninomiya K."/>
            <person name="Ishibashi T."/>
            <person name="Yamashita H."/>
            <person name="Murakawa K."/>
            <person name="Fujimori K."/>
            <person name="Tanai H."/>
            <person name="Kimata M."/>
            <person name="Watanabe M."/>
            <person name="Hiraoka S."/>
            <person name="Chiba Y."/>
            <person name="Ishida S."/>
            <person name="Ono Y."/>
            <person name="Takiguchi S."/>
            <person name="Watanabe S."/>
            <person name="Yosida M."/>
            <person name="Hotuta T."/>
            <person name="Kusano J."/>
            <person name="Kanehori K."/>
            <person name="Takahashi-Fujii A."/>
            <person name="Hara H."/>
            <person name="Tanase T.-O."/>
            <person name="Nomura Y."/>
            <person name="Togiya S."/>
            <person name="Komai F."/>
            <person name="Hara R."/>
            <person name="Takeuchi K."/>
            <person name="Arita M."/>
            <person name="Imose N."/>
            <person name="Musashino K."/>
            <person name="Yuuki H."/>
            <person name="Oshima A."/>
            <person name="Sasaki N."/>
            <person name="Aotsuka S."/>
            <person name="Yoshikawa Y."/>
            <person name="Matsunawa H."/>
            <person name="Ichihara T."/>
            <person name="Shiohata N."/>
            <person name="Sano S."/>
            <person name="Moriya S."/>
            <person name="Momiyama H."/>
            <person name="Satoh N."/>
            <person name="Takami S."/>
            <person name="Terashima Y."/>
            <person name="Suzuki O."/>
            <person name="Nakagawa S."/>
            <person name="Senoh A."/>
            <person name="Mizoguchi H."/>
            <person name="Goto Y."/>
            <person name="Shimizu F."/>
            <person name="Wakebe H."/>
            <person name="Hishigaki H."/>
            <person name="Watanabe T."/>
            <person name="Sugiyama A."/>
            <person name="Takemoto M."/>
            <person name="Kawakami B."/>
            <person name="Yamazaki M."/>
            <person name="Watanabe K."/>
            <person name="Kumagai A."/>
            <person name="Itakura S."/>
            <person name="Fukuzumi Y."/>
            <person name="Fujimori Y."/>
            <person name="Komiyama M."/>
            <person name="Tashiro H."/>
            <person name="Tanigami A."/>
            <person name="Fujiwara T."/>
            <person name="Ono T."/>
            <person name="Yamada K."/>
            <person name="Fujii Y."/>
            <person name="Ozaki K."/>
            <person name="Hirao M."/>
            <person name="Ohmori Y."/>
            <person name="Kawabata A."/>
            <person name="Hikiji T."/>
            <person name="Kobatake N."/>
            <person name="Inagaki H."/>
            <person name="Ikema Y."/>
            <person name="Okamoto S."/>
            <person name="Okitani R."/>
            <person name="Kawakami T."/>
            <person name="Noguchi S."/>
            <person name="Itoh T."/>
            <person name="Shigeta K."/>
            <person name="Senba T."/>
            <person name="Matsumura K."/>
            <person name="Nakajima Y."/>
            <person name="Mizuno T."/>
            <person name="Morinaga M."/>
            <person name="Sasaki M."/>
            <person name="Togashi T."/>
            <person name="Oyama M."/>
            <person name="Hata H."/>
            <person name="Watanabe M."/>
            <person name="Komatsu T."/>
            <person name="Mizushima-Sugano J."/>
            <person name="Satoh T."/>
            <person name="Shirai Y."/>
            <person name="Takahashi Y."/>
            <person name="Nakagawa K."/>
            <person name="Okumura K."/>
            <person name="Nagase T."/>
            <person name="Nomura N."/>
            <person name="Kikuchi H."/>
            <person name="Masuho Y."/>
            <person name="Yamashita R."/>
            <person name="Nakai K."/>
            <person name="Yada T."/>
            <person name="Nakamura Y."/>
            <person name="Ohara O."/>
            <person name="Isogai T."/>
            <person name="Sugano S."/>
        </authorList>
    </citation>
    <scope>NUCLEOTIDE SEQUENCE [LARGE SCALE MRNA] (ISOFORMS 2 AND 4)</scope>
    <source>
        <tissue>Kidney</tissue>
        <tissue>Liver</tissue>
    </source>
</reference>
<reference key="3">
    <citation type="submission" date="2005-04" db="EMBL/GenBank/DDBJ databases">
        <authorList>
            <person name="Suzuki Y."/>
            <person name="Sugano S."/>
            <person name="Totoki Y."/>
            <person name="Toyoda A."/>
            <person name="Takeda T."/>
            <person name="Sakaki Y."/>
            <person name="Tanaka A."/>
            <person name="Yokoyama S."/>
        </authorList>
    </citation>
    <scope>NUCLEOTIDE SEQUENCE [LARGE SCALE MRNA] (ISOFORM 2)</scope>
    <source>
        <tissue>Liver</tissue>
    </source>
</reference>
<reference key="4">
    <citation type="journal article" date="2003" name="Nature">
        <title>The DNA sequence and analysis of human chromosome 6.</title>
        <authorList>
            <person name="Mungall A.J."/>
            <person name="Palmer S.A."/>
            <person name="Sims S.K."/>
            <person name="Edwards C.A."/>
            <person name="Ashurst J.L."/>
            <person name="Wilming L."/>
            <person name="Jones M.C."/>
            <person name="Horton R."/>
            <person name="Hunt S.E."/>
            <person name="Scott C.E."/>
            <person name="Gilbert J.G.R."/>
            <person name="Clamp M.E."/>
            <person name="Bethel G."/>
            <person name="Milne S."/>
            <person name="Ainscough R."/>
            <person name="Almeida J.P."/>
            <person name="Ambrose K.D."/>
            <person name="Andrews T.D."/>
            <person name="Ashwell R.I.S."/>
            <person name="Babbage A.K."/>
            <person name="Bagguley C.L."/>
            <person name="Bailey J."/>
            <person name="Banerjee R."/>
            <person name="Barker D.J."/>
            <person name="Barlow K.F."/>
            <person name="Bates K."/>
            <person name="Beare D.M."/>
            <person name="Beasley H."/>
            <person name="Beasley O."/>
            <person name="Bird C.P."/>
            <person name="Blakey S.E."/>
            <person name="Bray-Allen S."/>
            <person name="Brook J."/>
            <person name="Brown A.J."/>
            <person name="Brown J.Y."/>
            <person name="Burford D.C."/>
            <person name="Burrill W."/>
            <person name="Burton J."/>
            <person name="Carder C."/>
            <person name="Carter N.P."/>
            <person name="Chapman J.C."/>
            <person name="Clark S.Y."/>
            <person name="Clark G."/>
            <person name="Clee C.M."/>
            <person name="Clegg S."/>
            <person name="Cobley V."/>
            <person name="Collier R.E."/>
            <person name="Collins J.E."/>
            <person name="Colman L.K."/>
            <person name="Corby N.R."/>
            <person name="Coville G.J."/>
            <person name="Culley K.M."/>
            <person name="Dhami P."/>
            <person name="Davies J."/>
            <person name="Dunn M."/>
            <person name="Earthrowl M.E."/>
            <person name="Ellington A.E."/>
            <person name="Evans K.A."/>
            <person name="Faulkner L."/>
            <person name="Francis M.D."/>
            <person name="Frankish A."/>
            <person name="Frankland J."/>
            <person name="French L."/>
            <person name="Garner P."/>
            <person name="Garnett J."/>
            <person name="Ghori M.J."/>
            <person name="Gilby L.M."/>
            <person name="Gillson C.J."/>
            <person name="Glithero R.J."/>
            <person name="Grafham D.V."/>
            <person name="Grant M."/>
            <person name="Gribble S."/>
            <person name="Griffiths C."/>
            <person name="Griffiths M.N.D."/>
            <person name="Hall R."/>
            <person name="Halls K.S."/>
            <person name="Hammond S."/>
            <person name="Harley J.L."/>
            <person name="Hart E.A."/>
            <person name="Heath P.D."/>
            <person name="Heathcott R."/>
            <person name="Holmes S.J."/>
            <person name="Howden P.J."/>
            <person name="Howe K.L."/>
            <person name="Howell G.R."/>
            <person name="Huckle E."/>
            <person name="Humphray S.J."/>
            <person name="Humphries M.D."/>
            <person name="Hunt A.R."/>
            <person name="Johnson C.M."/>
            <person name="Joy A.A."/>
            <person name="Kay M."/>
            <person name="Keenan S.J."/>
            <person name="Kimberley A.M."/>
            <person name="King A."/>
            <person name="Laird G.K."/>
            <person name="Langford C."/>
            <person name="Lawlor S."/>
            <person name="Leongamornlert D.A."/>
            <person name="Leversha M."/>
            <person name="Lloyd C.R."/>
            <person name="Lloyd D.M."/>
            <person name="Loveland J.E."/>
            <person name="Lovell J."/>
            <person name="Martin S."/>
            <person name="Mashreghi-Mohammadi M."/>
            <person name="Maslen G.L."/>
            <person name="Matthews L."/>
            <person name="McCann O.T."/>
            <person name="McLaren S.J."/>
            <person name="McLay K."/>
            <person name="McMurray A."/>
            <person name="Moore M.J.F."/>
            <person name="Mullikin J.C."/>
            <person name="Niblett D."/>
            <person name="Nickerson T."/>
            <person name="Novik K.L."/>
            <person name="Oliver K."/>
            <person name="Overton-Larty E.K."/>
            <person name="Parker A."/>
            <person name="Patel R."/>
            <person name="Pearce A.V."/>
            <person name="Peck A.I."/>
            <person name="Phillimore B.J.C.T."/>
            <person name="Phillips S."/>
            <person name="Plumb R.W."/>
            <person name="Porter K.M."/>
            <person name="Ramsey Y."/>
            <person name="Ranby S.A."/>
            <person name="Rice C.M."/>
            <person name="Ross M.T."/>
            <person name="Searle S.M."/>
            <person name="Sehra H.K."/>
            <person name="Sheridan E."/>
            <person name="Skuce C.D."/>
            <person name="Smith S."/>
            <person name="Smith M."/>
            <person name="Spraggon L."/>
            <person name="Squares S.L."/>
            <person name="Steward C.A."/>
            <person name="Sycamore N."/>
            <person name="Tamlyn-Hall G."/>
            <person name="Tester J."/>
            <person name="Theaker A.J."/>
            <person name="Thomas D.W."/>
            <person name="Thorpe A."/>
            <person name="Tracey A."/>
            <person name="Tromans A."/>
            <person name="Tubby B."/>
            <person name="Wall M."/>
            <person name="Wallis J.M."/>
            <person name="West A.P."/>
            <person name="White S.S."/>
            <person name="Whitehead S.L."/>
            <person name="Whittaker H."/>
            <person name="Wild A."/>
            <person name="Willey D.J."/>
            <person name="Wilmer T.E."/>
            <person name="Wood J.M."/>
            <person name="Wray P.W."/>
            <person name="Wyatt J.C."/>
            <person name="Young L."/>
            <person name="Younger R.M."/>
            <person name="Bentley D.R."/>
            <person name="Coulson A."/>
            <person name="Durbin R.M."/>
            <person name="Hubbard T."/>
            <person name="Sulston J.E."/>
            <person name="Dunham I."/>
            <person name="Rogers J."/>
            <person name="Beck S."/>
        </authorList>
    </citation>
    <scope>NUCLEOTIDE SEQUENCE [LARGE SCALE GENOMIC DNA]</scope>
</reference>
<reference key="5">
    <citation type="submission" date="2005-09" db="EMBL/GenBank/DDBJ databases">
        <authorList>
            <person name="Mural R.J."/>
            <person name="Istrail S."/>
            <person name="Sutton G.G."/>
            <person name="Florea L."/>
            <person name="Halpern A.L."/>
            <person name="Mobarry C.M."/>
            <person name="Lippert R."/>
            <person name="Walenz B."/>
            <person name="Shatkay H."/>
            <person name="Dew I."/>
            <person name="Miller J.R."/>
            <person name="Flanigan M.J."/>
            <person name="Edwards N.J."/>
            <person name="Bolanos R."/>
            <person name="Fasulo D."/>
            <person name="Halldorsson B.V."/>
            <person name="Hannenhalli S."/>
            <person name="Turner R."/>
            <person name="Yooseph S."/>
            <person name="Lu F."/>
            <person name="Nusskern D.R."/>
            <person name="Shue B.C."/>
            <person name="Zheng X.H."/>
            <person name="Zhong F."/>
            <person name="Delcher A.L."/>
            <person name="Huson D.H."/>
            <person name="Kravitz S.A."/>
            <person name="Mouchard L."/>
            <person name="Reinert K."/>
            <person name="Remington K.A."/>
            <person name="Clark A.G."/>
            <person name="Waterman M.S."/>
            <person name="Eichler E.E."/>
            <person name="Adams M.D."/>
            <person name="Hunkapiller M.W."/>
            <person name="Myers E.W."/>
            <person name="Venter J.C."/>
        </authorList>
    </citation>
    <scope>NUCLEOTIDE SEQUENCE [LARGE SCALE GENOMIC DNA]</scope>
</reference>
<reference key="6">
    <citation type="journal article" date="2004" name="Genome Res.">
        <title>The status, quality, and expansion of the NIH full-length cDNA project: the Mammalian Gene Collection (MGC).</title>
        <authorList>
            <consortium name="The MGC Project Team"/>
        </authorList>
    </citation>
    <scope>NUCLEOTIDE SEQUENCE [LARGE SCALE MRNA] (ISOFORMS 1 AND 3)</scope>
</reference>
<reference key="7">
    <citation type="journal article" date="2014" name="J. Proteomics">
        <title>An enzyme assisted RP-RPLC approach for in-depth analysis of human liver phosphoproteome.</title>
        <authorList>
            <person name="Bian Y."/>
            <person name="Song C."/>
            <person name="Cheng K."/>
            <person name="Dong M."/>
            <person name="Wang F."/>
            <person name="Huang J."/>
            <person name="Sun D."/>
            <person name="Wang L."/>
            <person name="Ye M."/>
            <person name="Zou H."/>
        </authorList>
    </citation>
    <scope>PHOSPHORYLATION [LARGE SCALE ANALYSIS] AT SER-362</scope>
    <scope>IDENTIFICATION BY MASS SPECTROMETRY [LARGE SCALE ANALYSIS]</scope>
    <source>
        <tissue>Liver</tissue>
    </source>
</reference>
<reference key="8">
    <citation type="journal article" date="2018" name="J. Biol. Chem.">
        <title>Reassignment of the human aldehyde dehydrogenase ALDH8A1 (ALDH12) to the kynurenine pathway in tryptophan catabolism.</title>
        <authorList>
            <person name="Davis I."/>
            <person name="Yang Y."/>
            <person name="Wherritt D."/>
            <person name="Liu A."/>
        </authorList>
    </citation>
    <scope>FUNCTION</scope>
    <scope>CATALYTIC ACTIVITY</scope>
    <scope>MUTAGENESIS OF ARG-109; ASN-155 AND ARG-451</scope>
    <scope>PATHWAY</scope>
</reference>
<feature type="chain" id="PRO_0000312954" description="2-aminomuconic semialdehyde dehydrogenase">
    <location>
        <begin position="1"/>
        <end position="487"/>
    </location>
</feature>
<feature type="active site" description="Proton acceptor" evidence="3 4">
    <location>
        <position position="253"/>
    </location>
</feature>
<feature type="active site" description="Nucleophile" evidence="3 4">
    <location>
        <position position="287"/>
    </location>
</feature>
<feature type="binding site" evidence="2">
    <location>
        <begin position="209"/>
        <end position="215"/>
    </location>
    <ligand>
        <name>NAD(+)</name>
        <dbReference type="ChEBI" id="CHEBI:57540"/>
    </ligand>
</feature>
<feature type="site" description="Transition state stabilizer" evidence="1">
    <location>
        <position position="155"/>
    </location>
</feature>
<feature type="modified residue" description="Phosphoserine" evidence="14">
    <location>
        <position position="362"/>
    </location>
</feature>
<feature type="splice variant" id="VSP_043279" description="In isoform 4." evidence="8">
    <location>
        <begin position="148"/>
        <end position="197"/>
    </location>
</feature>
<feature type="splice variant" id="VSP_039759" description="In isoform 3." evidence="9">
    <original>AGLISPWNLPLYL</original>
    <variation>VPGYTCRTCRFVT</variation>
    <location>
        <begin position="148"/>
        <end position="160"/>
    </location>
</feature>
<feature type="splice variant" id="VSP_039760" description="In isoform 3." evidence="9">
    <location>
        <begin position="161"/>
        <end position="487"/>
    </location>
</feature>
<feature type="splice variant" id="VSP_029972" description="In isoform 2." evidence="7 8 10">
    <location>
        <begin position="284"/>
        <end position="337"/>
    </location>
</feature>
<feature type="sequence variant" id="VAR_037618" description="In dbSNP:rs2294315.">
    <original>F</original>
    <variation>S</variation>
    <location>
        <position position="402"/>
    </location>
</feature>
<feature type="mutagenesis site" description="About 65-fold loss of catalytic efficiency." evidence="6">
    <original>R</original>
    <variation>A</variation>
    <location>
        <position position="109"/>
    </location>
</feature>
<feature type="mutagenesis site" description="Complete loss of activity." evidence="6">
    <original>N</original>
    <variation>A</variation>
    <location>
        <position position="155"/>
    </location>
</feature>
<feature type="mutagenesis site" description="Complete loss of activity." evidence="6">
    <original>R</original>
    <variation>A</variation>
    <location>
        <position position="451"/>
    </location>
</feature>
<feature type="sequence conflict" description="In Ref. 3; BAD96568." evidence="11" ref="3">
    <original>L</original>
    <variation>P</variation>
    <location>
        <position position="252"/>
    </location>
</feature>
<protein>
    <recommendedName>
        <fullName evidence="12">2-aminomuconic semialdehyde dehydrogenase</fullName>
        <ecNumber evidence="6">1.2.1.32</ecNumber>
    </recommendedName>
    <alternativeName>
        <fullName>Aldehyde dehydrogenase 12</fullName>
    </alternativeName>
    <alternativeName>
        <fullName evidence="13">Aldehyde dehydrogenase family 8 member A1</fullName>
    </alternativeName>
</protein>
<comment type="function">
    <text evidence="6">Catalyzes the NAD-dependent oxidation of 2-aminomuconic semialdehyde of the kynurenine metabolic pathway in L-tryptophan degradation.</text>
</comment>
<comment type="catalytic activity">
    <reaction evidence="6">
        <text>2-aminomuconate 6-semialdehyde + NAD(+) + H2O = (2Z,4E)-2-aminomuconate + NADH + 2 H(+)</text>
        <dbReference type="Rhea" id="RHEA:14469"/>
        <dbReference type="ChEBI" id="CHEBI:15377"/>
        <dbReference type="ChEBI" id="CHEBI:15378"/>
        <dbReference type="ChEBI" id="CHEBI:57540"/>
        <dbReference type="ChEBI" id="CHEBI:57945"/>
        <dbReference type="ChEBI" id="CHEBI:77634"/>
        <dbReference type="ChEBI" id="CHEBI:77859"/>
        <dbReference type="EC" id="1.2.1.32"/>
    </reaction>
</comment>
<comment type="pathway">
    <text evidence="12">Amino-acid degradation; L-kynurenine degradation.</text>
</comment>
<comment type="subcellular location">
    <subcellularLocation>
        <location evidence="1">Cytoplasm</location>
    </subcellularLocation>
</comment>
<comment type="alternative products">
    <event type="alternative splicing"/>
    <isoform>
        <id>Q9H2A2-1</id>
        <name>1</name>
        <sequence type="displayed"/>
    </isoform>
    <isoform>
        <id>Q9H2A2-2</id>
        <name>2</name>
        <sequence type="described" ref="VSP_029972"/>
    </isoform>
    <isoform>
        <id>Q9H2A2-3</id>
        <name>3</name>
        <sequence type="described" ref="VSP_039759 VSP_039760"/>
    </isoform>
    <isoform>
        <id>Q9H2A2-4</id>
        <name>4</name>
        <sequence type="described" ref="VSP_043279"/>
    </isoform>
</comment>
<comment type="tissue specificity">
    <text evidence="5">Highly expressed in adult kidney and liver. Detected at lower levels in fetal liver and kidney.</text>
</comment>
<comment type="miscellaneous">
    <molecule>Isoform 2</molecule>
    <text evidence="11">Lacks enzymatic activity.</text>
</comment>
<comment type="miscellaneous">
    <molecule>Isoform 3</molecule>
    <text evidence="11">May be produced at very low levels due to a premature stop codon in the mRNA, leading to nonsense-mediated mRNA decay.</text>
</comment>
<comment type="similarity">
    <text evidence="11">Belongs to the aldehyde dehydrogenase family.</text>
</comment>
<comment type="caution">
    <text evidence="5 6">Originally described as a retinal dehydrogenase based on its ability to preferentially oxidize 9-cis-retinal (PubMed:11007799). It has been reassigned to a 2-aminomuconic semialdehyde dehydrogenase (PubMed:29703752).</text>
</comment>
<comment type="sequence caution" evidence="11">
    <conflict type="erroneous translation">
        <sequence resource="EMBL-CDS" id="AAI14474"/>
    </conflict>
    <text>Wrong choice of CDS.</text>
</comment>
<evidence type="ECO:0000250" key="1"/>
<evidence type="ECO:0000255" key="2"/>
<evidence type="ECO:0000255" key="3">
    <source>
        <dbReference type="PROSITE-ProRule" id="PRU10007"/>
    </source>
</evidence>
<evidence type="ECO:0000255" key="4">
    <source>
        <dbReference type="PROSITE-ProRule" id="PRU10008"/>
    </source>
</evidence>
<evidence type="ECO:0000269" key="5">
    <source>
    </source>
</evidence>
<evidence type="ECO:0000269" key="6">
    <source>
    </source>
</evidence>
<evidence type="ECO:0000303" key="7">
    <source>
    </source>
</evidence>
<evidence type="ECO:0000303" key="8">
    <source>
    </source>
</evidence>
<evidence type="ECO:0000303" key="9">
    <source>
    </source>
</evidence>
<evidence type="ECO:0000303" key="10">
    <source ref="3"/>
</evidence>
<evidence type="ECO:0000305" key="11"/>
<evidence type="ECO:0000305" key="12">
    <source>
    </source>
</evidence>
<evidence type="ECO:0000312" key="13">
    <source>
        <dbReference type="HGNC" id="HGNC:15471"/>
    </source>
</evidence>
<evidence type="ECO:0007744" key="14">
    <source>
    </source>
</evidence>
<dbReference type="EC" id="1.2.1.32" evidence="6"/>
<dbReference type="EMBL" id="AF303134">
    <property type="protein sequence ID" value="AAG42417.1"/>
    <property type="molecule type" value="mRNA"/>
</dbReference>
<dbReference type="EMBL" id="AK290784">
    <property type="protein sequence ID" value="BAF83473.1"/>
    <property type="molecule type" value="mRNA"/>
</dbReference>
<dbReference type="EMBL" id="AK298325">
    <property type="protein sequence ID" value="BAH12757.1"/>
    <property type="molecule type" value="mRNA"/>
</dbReference>
<dbReference type="EMBL" id="AK222848">
    <property type="protein sequence ID" value="BAD96568.1"/>
    <property type="molecule type" value="mRNA"/>
</dbReference>
<dbReference type="EMBL" id="AL021939">
    <property type="status" value="NOT_ANNOTATED_CDS"/>
    <property type="molecule type" value="Genomic_DNA"/>
</dbReference>
<dbReference type="EMBL" id="AL445190">
    <property type="status" value="NOT_ANNOTATED_CDS"/>
    <property type="molecule type" value="Genomic_DNA"/>
</dbReference>
<dbReference type="EMBL" id="CH471051">
    <property type="protein sequence ID" value="EAW47985.1"/>
    <property type="molecule type" value="Genomic_DNA"/>
</dbReference>
<dbReference type="EMBL" id="CH471051">
    <property type="protein sequence ID" value="EAW47986.1"/>
    <property type="molecule type" value="Genomic_DNA"/>
</dbReference>
<dbReference type="EMBL" id="BC113862">
    <property type="protein sequence ID" value="AAI13863.1"/>
    <property type="molecule type" value="mRNA"/>
</dbReference>
<dbReference type="EMBL" id="BC114473">
    <property type="protein sequence ID" value="AAI14474.1"/>
    <property type="status" value="ALT_SEQ"/>
    <property type="molecule type" value="mRNA"/>
</dbReference>
<dbReference type="CCDS" id="CCDS5171.1">
    <molecule id="Q9H2A2-1"/>
</dbReference>
<dbReference type="CCDS" id="CCDS5172.1">
    <molecule id="Q9H2A2-2"/>
</dbReference>
<dbReference type="CCDS" id="CCDS55057.1">
    <molecule id="Q9H2A2-4"/>
</dbReference>
<dbReference type="RefSeq" id="NP_001180409.1">
    <molecule id="Q9H2A2-4"/>
    <property type="nucleotide sequence ID" value="NM_001193480.2"/>
</dbReference>
<dbReference type="RefSeq" id="NP_072090.1">
    <molecule id="Q9H2A2-1"/>
    <property type="nucleotide sequence ID" value="NM_022568.4"/>
</dbReference>
<dbReference type="RefSeq" id="NP_739577.1">
    <molecule id="Q9H2A2-2"/>
    <property type="nucleotide sequence ID" value="NM_170771.3"/>
</dbReference>
<dbReference type="SMR" id="Q9H2A2"/>
<dbReference type="BioGRID" id="122204">
    <property type="interactions" value="27"/>
</dbReference>
<dbReference type="FunCoup" id="Q9H2A2">
    <property type="interactions" value="65"/>
</dbReference>
<dbReference type="IntAct" id="Q9H2A2">
    <property type="interactions" value="3"/>
</dbReference>
<dbReference type="STRING" id="9606.ENSP00000265605"/>
<dbReference type="GlyGen" id="Q9H2A2">
    <property type="glycosylation" value="1 site, 1 O-linked glycan (1 site)"/>
</dbReference>
<dbReference type="iPTMnet" id="Q9H2A2"/>
<dbReference type="PhosphoSitePlus" id="Q9H2A2"/>
<dbReference type="BioMuta" id="ALDH8A1"/>
<dbReference type="DMDM" id="74752601"/>
<dbReference type="jPOST" id="Q9H2A2"/>
<dbReference type="MassIVE" id="Q9H2A2"/>
<dbReference type="PaxDb" id="9606-ENSP00000265605"/>
<dbReference type="PeptideAtlas" id="Q9H2A2"/>
<dbReference type="ProteomicsDB" id="80515">
    <molecule id="Q9H2A2-1"/>
</dbReference>
<dbReference type="ProteomicsDB" id="80516">
    <molecule id="Q9H2A2-2"/>
</dbReference>
<dbReference type="ProteomicsDB" id="80517">
    <molecule id="Q9H2A2-3"/>
</dbReference>
<dbReference type="ProteomicsDB" id="80518">
    <molecule id="Q9H2A2-4"/>
</dbReference>
<dbReference type="Antibodypedia" id="19736">
    <property type="antibodies" value="123 antibodies from 20 providers"/>
</dbReference>
<dbReference type="DNASU" id="64577"/>
<dbReference type="Ensembl" id="ENST00000265605.7">
    <molecule id="Q9H2A2-1"/>
    <property type="protein sequence ID" value="ENSP00000265605.2"/>
    <property type="gene ID" value="ENSG00000118514.14"/>
</dbReference>
<dbReference type="Ensembl" id="ENST00000349305.8">
    <molecule id="Q9H2A2-3"/>
    <property type="protein sequence ID" value="ENSP00000325473.4"/>
    <property type="gene ID" value="ENSG00000118514.14"/>
</dbReference>
<dbReference type="Ensembl" id="ENST00000367845.6">
    <molecule id="Q9H2A2-2"/>
    <property type="protein sequence ID" value="ENSP00000356819.2"/>
    <property type="gene ID" value="ENSG00000118514.14"/>
</dbReference>
<dbReference type="Ensembl" id="ENST00000367847.2">
    <molecule id="Q9H2A2-4"/>
    <property type="protein sequence ID" value="ENSP00000356821.2"/>
    <property type="gene ID" value="ENSG00000118514.14"/>
</dbReference>
<dbReference type="GeneID" id="64577"/>
<dbReference type="KEGG" id="hsa:64577"/>
<dbReference type="MANE-Select" id="ENST00000265605.7">
    <property type="protein sequence ID" value="ENSP00000265605.2"/>
    <property type="RefSeq nucleotide sequence ID" value="NM_022568.4"/>
    <property type="RefSeq protein sequence ID" value="NP_072090.1"/>
</dbReference>
<dbReference type="UCSC" id="uc003qew.3">
    <molecule id="Q9H2A2-1"/>
    <property type="organism name" value="human"/>
</dbReference>
<dbReference type="AGR" id="HGNC:15471"/>
<dbReference type="CTD" id="64577"/>
<dbReference type="DisGeNET" id="64577"/>
<dbReference type="GeneCards" id="ALDH8A1"/>
<dbReference type="HGNC" id="HGNC:15471">
    <property type="gene designation" value="ALDH8A1"/>
</dbReference>
<dbReference type="HPA" id="ENSG00000118514">
    <property type="expression patterns" value="Group enriched (kidney, liver)"/>
</dbReference>
<dbReference type="MIM" id="606467">
    <property type="type" value="gene"/>
</dbReference>
<dbReference type="neXtProt" id="NX_Q9H2A2"/>
<dbReference type="OpenTargets" id="ENSG00000118514"/>
<dbReference type="PharmGKB" id="PA24705"/>
<dbReference type="VEuPathDB" id="HostDB:ENSG00000118514"/>
<dbReference type="eggNOG" id="KOG2450">
    <property type="taxonomic scope" value="Eukaryota"/>
</dbReference>
<dbReference type="GeneTree" id="ENSGT00940000156799"/>
<dbReference type="HOGENOM" id="CLU_005391_0_0_1"/>
<dbReference type="InParanoid" id="Q9H2A2"/>
<dbReference type="OMA" id="PMPIAAW"/>
<dbReference type="OrthoDB" id="310895at2759"/>
<dbReference type="PAN-GO" id="Q9H2A2">
    <property type="GO annotations" value="2 GO annotations based on evolutionary models"/>
</dbReference>
<dbReference type="PhylomeDB" id="Q9H2A2"/>
<dbReference type="TreeFam" id="TF314129"/>
<dbReference type="BioCyc" id="MetaCyc:ENSG00000118514-MONOMER"/>
<dbReference type="BRENDA" id="1.2.1.3">
    <property type="organism ID" value="2681"/>
</dbReference>
<dbReference type="PathwayCommons" id="Q9H2A2"/>
<dbReference type="Reactome" id="R-HSA-5365859">
    <property type="pathway name" value="RA biosynthesis pathway"/>
</dbReference>
<dbReference type="SABIO-RK" id="Q9H2A2"/>
<dbReference type="SignaLink" id="Q9H2A2"/>
<dbReference type="UniPathway" id="UPA00334"/>
<dbReference type="BioGRID-ORCS" id="64577">
    <property type="hits" value="14 hits in 1148 CRISPR screens"/>
</dbReference>
<dbReference type="ChiTaRS" id="ALDH8A1">
    <property type="organism name" value="human"/>
</dbReference>
<dbReference type="GenomeRNAi" id="64577"/>
<dbReference type="Pharos" id="Q9H2A2">
    <property type="development level" value="Tbio"/>
</dbReference>
<dbReference type="PRO" id="PR:Q9H2A2"/>
<dbReference type="Proteomes" id="UP000005640">
    <property type="component" value="Chromosome 6"/>
</dbReference>
<dbReference type="RNAct" id="Q9H2A2">
    <property type="molecule type" value="protein"/>
</dbReference>
<dbReference type="Bgee" id="ENSG00000118514">
    <property type="expression patterns" value="Expressed in nephron tubule and 133 other cell types or tissues"/>
</dbReference>
<dbReference type="ExpressionAtlas" id="Q9H2A2">
    <property type="expression patterns" value="baseline and differential"/>
</dbReference>
<dbReference type="GO" id="GO:0005829">
    <property type="term" value="C:cytosol"/>
    <property type="evidence" value="ECO:0000304"/>
    <property type="project" value="Reactome"/>
</dbReference>
<dbReference type="GO" id="GO:0070062">
    <property type="term" value="C:extracellular exosome"/>
    <property type="evidence" value="ECO:0007005"/>
    <property type="project" value="UniProtKB"/>
</dbReference>
<dbReference type="GO" id="GO:0047102">
    <property type="term" value="F:aminomuconate-semialdehyde dehydrogenase activity"/>
    <property type="evidence" value="ECO:0007669"/>
    <property type="project" value="UniProtKB-EC"/>
</dbReference>
<dbReference type="GO" id="GO:0001758">
    <property type="term" value="F:retinal dehydrogenase activity"/>
    <property type="evidence" value="ECO:0000314"/>
    <property type="project" value="UniProtKB"/>
</dbReference>
<dbReference type="GO" id="GO:0042904">
    <property type="term" value="P:9-cis-retinoic acid biosynthetic process"/>
    <property type="evidence" value="ECO:0007669"/>
    <property type="project" value="Ensembl"/>
</dbReference>
<dbReference type="GO" id="GO:0097053">
    <property type="term" value="P:L-kynurenine catabolic process"/>
    <property type="evidence" value="ECO:0007669"/>
    <property type="project" value="UniProtKB-UniPathway"/>
</dbReference>
<dbReference type="GO" id="GO:0042574">
    <property type="term" value="P:retinal metabolic process"/>
    <property type="evidence" value="ECO:0000314"/>
    <property type="project" value="UniProtKB"/>
</dbReference>
<dbReference type="GO" id="GO:0042573">
    <property type="term" value="P:retinoic acid metabolic process"/>
    <property type="evidence" value="ECO:0000314"/>
    <property type="project" value="UniProtKB"/>
</dbReference>
<dbReference type="CDD" id="cd07093">
    <property type="entry name" value="ALDH_F8_HMSADH"/>
    <property type="match status" value="1"/>
</dbReference>
<dbReference type="FunFam" id="3.40.605.10:FF:000001">
    <property type="entry name" value="Aldehyde dehydrogenase 1"/>
    <property type="match status" value="1"/>
</dbReference>
<dbReference type="FunFam" id="3.40.309.10:FF:000021">
    <property type="entry name" value="Aldehyde dehydrogenase family 8 member A1"/>
    <property type="match status" value="1"/>
</dbReference>
<dbReference type="Gene3D" id="3.40.605.10">
    <property type="entry name" value="Aldehyde Dehydrogenase, Chain A, domain 1"/>
    <property type="match status" value="1"/>
</dbReference>
<dbReference type="Gene3D" id="3.40.309.10">
    <property type="entry name" value="Aldehyde Dehydrogenase, Chain A, domain 2"/>
    <property type="match status" value="1"/>
</dbReference>
<dbReference type="InterPro" id="IPR016161">
    <property type="entry name" value="Ald_DH/histidinol_DH"/>
</dbReference>
<dbReference type="InterPro" id="IPR016163">
    <property type="entry name" value="Ald_DH_C"/>
</dbReference>
<dbReference type="InterPro" id="IPR016160">
    <property type="entry name" value="Ald_DH_CS_CYS"/>
</dbReference>
<dbReference type="InterPro" id="IPR029510">
    <property type="entry name" value="Ald_DH_CS_GLU"/>
</dbReference>
<dbReference type="InterPro" id="IPR016162">
    <property type="entry name" value="Ald_DH_N"/>
</dbReference>
<dbReference type="InterPro" id="IPR015590">
    <property type="entry name" value="Aldehyde_DH_dom"/>
</dbReference>
<dbReference type="PANTHER" id="PTHR43720">
    <property type="entry name" value="2-AMINOMUCONIC SEMIALDEHYDE DEHYDROGENASE"/>
    <property type="match status" value="1"/>
</dbReference>
<dbReference type="PANTHER" id="PTHR43720:SF2">
    <property type="entry name" value="2-AMINOMUCONIC SEMIALDEHYDE DEHYDROGENASE"/>
    <property type="match status" value="1"/>
</dbReference>
<dbReference type="Pfam" id="PF00171">
    <property type="entry name" value="Aldedh"/>
    <property type="match status" value="1"/>
</dbReference>
<dbReference type="SUPFAM" id="SSF53720">
    <property type="entry name" value="ALDH-like"/>
    <property type="match status" value="1"/>
</dbReference>
<dbReference type="PROSITE" id="PS00070">
    <property type="entry name" value="ALDEHYDE_DEHYDR_CYS"/>
    <property type="match status" value="1"/>
</dbReference>
<dbReference type="PROSITE" id="PS00687">
    <property type="entry name" value="ALDEHYDE_DEHYDR_GLU"/>
    <property type="match status" value="1"/>
</dbReference>